<organism>
    <name type="scientific">Escherichia phage P1</name>
    <name type="common">Bacteriophage P1</name>
    <dbReference type="NCBI Taxonomy" id="2886926"/>
    <lineage>
        <taxon>Viruses</taxon>
        <taxon>Duplodnaviria</taxon>
        <taxon>Heunggongvirae</taxon>
        <taxon>Uroviricota</taxon>
        <taxon>Caudoviricetes</taxon>
        <taxon>Punavirus</taxon>
        <taxon>Punavirus P1</taxon>
    </lineage>
</organism>
<organismHost>
    <name type="scientific">Enterobacteriaceae</name>
    <dbReference type="NCBI Taxonomy" id="543"/>
</organismHost>
<comment type="function">
    <text>Stimulates microhomologous recombination. Enhances the recA-dependent precise excision of an IS1 element inserted within the E.coli galT gene.</text>
</comment>
<feature type="chain" id="PRO_0000165280" description="Recombination enhancement function protein">
    <location>
        <begin position="1"/>
        <end position="186"/>
    </location>
</feature>
<feature type="region of interest" description="Disordered" evidence="1">
    <location>
        <begin position="45"/>
        <end position="81"/>
    </location>
</feature>
<feature type="compositionally biased region" description="Basic and acidic residues" evidence="1">
    <location>
        <begin position="45"/>
        <end position="59"/>
    </location>
</feature>
<feature type="compositionally biased region" description="Basic residues" evidence="1">
    <location>
        <begin position="62"/>
        <end position="76"/>
    </location>
</feature>
<feature type="helix" evidence="2">
    <location>
        <begin position="82"/>
        <end position="92"/>
    </location>
</feature>
<feature type="helix" evidence="2">
    <location>
        <begin position="97"/>
        <end position="101"/>
    </location>
</feature>
<feature type="strand" evidence="2">
    <location>
        <begin position="109"/>
        <end position="115"/>
    </location>
</feature>
<feature type="strand" evidence="2">
    <location>
        <begin position="117"/>
        <end position="119"/>
    </location>
</feature>
<feature type="helix" evidence="2">
    <location>
        <begin position="122"/>
        <end position="124"/>
    </location>
</feature>
<feature type="strand" evidence="2">
    <location>
        <begin position="125"/>
        <end position="130"/>
    </location>
</feature>
<feature type="helix" evidence="2">
    <location>
        <begin position="131"/>
        <end position="134"/>
    </location>
</feature>
<feature type="helix" evidence="2">
    <location>
        <begin position="140"/>
        <end position="145"/>
    </location>
</feature>
<feature type="helix" evidence="2">
    <location>
        <begin position="161"/>
        <end position="167"/>
    </location>
</feature>
<feature type="helix" evidence="2">
    <location>
        <begin position="171"/>
        <end position="181"/>
    </location>
</feature>
<accession>P35926</accession>
<name>REF_BPP1</name>
<reference key="1">
    <citation type="journal article" date="1989" name="J. Bacteriol.">
        <title>Stimulation of IS1 excision by bacteriophage P1 ref function.</title>
        <authorList>
            <person name="Lu S.D."/>
            <person name="Lu D."/>
            <person name="Gottesman M."/>
        </authorList>
    </citation>
    <scope>NUCLEOTIDE SEQUENCE [GENOMIC DNA]</scope>
</reference>
<reference key="2">
    <citation type="journal article" date="2004" name="J. Bacteriol.">
        <title>Genome of bacteriophage P1.</title>
        <authorList>
            <person name="Lobocka M.B."/>
            <person name="Rose D.J."/>
            <person name="Plunkett G. III"/>
            <person name="Rusin M."/>
            <person name="Samojedny A."/>
            <person name="Lehnherr H."/>
            <person name="Yarmolinsky M.B."/>
            <person name="Blattner F.R."/>
        </authorList>
    </citation>
    <scope>NUCLEOTIDE SEQUENCE [LARGE SCALE GENOMIC DNA]</scope>
</reference>
<dbReference type="EMBL" id="M27041">
    <property type="protein sequence ID" value="AAA32422.1"/>
    <property type="molecule type" value="Genomic_DNA"/>
</dbReference>
<dbReference type="EMBL" id="AF234172">
    <property type="protein sequence ID" value="AAQ13980.1"/>
    <property type="molecule type" value="Genomic_DNA"/>
</dbReference>
<dbReference type="PIR" id="A60478">
    <property type="entry name" value="A60478"/>
</dbReference>
<dbReference type="RefSeq" id="YP_006474.1">
    <property type="nucleotide sequence ID" value="NC_005856.1"/>
</dbReference>
<dbReference type="PDB" id="3PLW">
    <property type="method" value="X-ray"/>
    <property type="resolution" value="1.40 A"/>
    <property type="chains" value="A=1-186"/>
</dbReference>
<dbReference type="PDBsum" id="3PLW"/>
<dbReference type="SMR" id="P35926"/>
<dbReference type="GeneID" id="2777429"/>
<dbReference type="KEGG" id="vg:2777429"/>
<dbReference type="EvolutionaryTrace" id="P35926"/>
<dbReference type="Proteomes" id="UP000008091">
    <property type="component" value="Genome"/>
</dbReference>
<dbReference type="GO" id="GO:0008047">
    <property type="term" value="F:enzyme activator activity"/>
    <property type="evidence" value="ECO:0000269"/>
    <property type="project" value="DisProt"/>
</dbReference>
<dbReference type="GO" id="GO:0006310">
    <property type="term" value="P:DNA recombination"/>
    <property type="evidence" value="ECO:0007669"/>
    <property type="project" value="UniProtKB-KW"/>
</dbReference>
<dbReference type="GO" id="GO:0006281">
    <property type="term" value="P:DNA repair"/>
    <property type="evidence" value="ECO:0007669"/>
    <property type="project" value="UniProtKB-KW"/>
</dbReference>
<dbReference type="DisProt" id="DP00932"/>
<dbReference type="Gene3D" id="3.30.40.190">
    <property type="match status" value="1"/>
</dbReference>
<dbReference type="InterPro" id="IPR031875">
    <property type="entry name" value="RecA_dep_nuc"/>
</dbReference>
<dbReference type="Pfam" id="PF16786">
    <property type="entry name" value="RecA_dep_nuc"/>
    <property type="match status" value="1"/>
</dbReference>
<keyword id="KW-0002">3D-structure</keyword>
<keyword id="KW-0228">DNA excision</keyword>
<keyword id="KW-0233">DNA recombination</keyword>
<keyword id="KW-1185">Reference proteome</keyword>
<evidence type="ECO:0000256" key="1">
    <source>
        <dbReference type="SAM" id="MobiDB-lite"/>
    </source>
</evidence>
<evidence type="ECO:0007829" key="2">
    <source>
        <dbReference type="PDB" id="3PLW"/>
    </source>
</evidence>
<sequence>MKTIEQKIEQCRKWQKAARERAIARQREKLADPVWRESQYQKMRDTLDRRIAKQKERPPASKTRKSAVKIKSRGLKGRTPTAEERRIANALGALPCIACYMHGVISNEVSLHHIAGRTAPGCHKKQLPLCRWHHQHAAPAEVREKYPWLVPVHADGVVGGKKEFTLLNKSEMELLADAYEMANIMH</sequence>
<gene>
    <name type="primary">ref</name>
</gene>
<proteinExistence type="evidence at protein level"/>
<protein>
    <recommendedName>
        <fullName>Recombination enhancement function protein</fullName>
    </recommendedName>
</protein>